<dbReference type="EMBL" id="FM204884">
    <property type="protein sequence ID" value="CAW97763.1"/>
    <property type="molecule type" value="Genomic_DNA"/>
</dbReference>
<dbReference type="SMR" id="C0MEG6"/>
<dbReference type="KEGG" id="seq:SZO_01160"/>
<dbReference type="eggNOG" id="COG0052">
    <property type="taxonomic scope" value="Bacteria"/>
</dbReference>
<dbReference type="HOGENOM" id="CLU_040318_1_2_9"/>
<dbReference type="Proteomes" id="UP000001368">
    <property type="component" value="Chromosome"/>
</dbReference>
<dbReference type="GO" id="GO:0022627">
    <property type="term" value="C:cytosolic small ribosomal subunit"/>
    <property type="evidence" value="ECO:0007669"/>
    <property type="project" value="TreeGrafter"/>
</dbReference>
<dbReference type="GO" id="GO:0003735">
    <property type="term" value="F:structural constituent of ribosome"/>
    <property type="evidence" value="ECO:0007669"/>
    <property type="project" value="InterPro"/>
</dbReference>
<dbReference type="GO" id="GO:0006412">
    <property type="term" value="P:translation"/>
    <property type="evidence" value="ECO:0007669"/>
    <property type="project" value="UniProtKB-UniRule"/>
</dbReference>
<dbReference type="CDD" id="cd01425">
    <property type="entry name" value="RPS2"/>
    <property type="match status" value="1"/>
</dbReference>
<dbReference type="FunFam" id="1.10.287.610:FF:000001">
    <property type="entry name" value="30S ribosomal protein S2"/>
    <property type="match status" value="1"/>
</dbReference>
<dbReference type="Gene3D" id="3.40.50.10490">
    <property type="entry name" value="Glucose-6-phosphate isomerase like protein, domain 1"/>
    <property type="match status" value="1"/>
</dbReference>
<dbReference type="Gene3D" id="1.10.287.610">
    <property type="entry name" value="Helix hairpin bin"/>
    <property type="match status" value="1"/>
</dbReference>
<dbReference type="HAMAP" id="MF_00291_B">
    <property type="entry name" value="Ribosomal_uS2_B"/>
    <property type="match status" value="1"/>
</dbReference>
<dbReference type="InterPro" id="IPR001865">
    <property type="entry name" value="Ribosomal_uS2"/>
</dbReference>
<dbReference type="InterPro" id="IPR005706">
    <property type="entry name" value="Ribosomal_uS2_bac/mit/plastid"/>
</dbReference>
<dbReference type="InterPro" id="IPR018130">
    <property type="entry name" value="Ribosomal_uS2_CS"/>
</dbReference>
<dbReference type="InterPro" id="IPR023591">
    <property type="entry name" value="Ribosomal_uS2_flav_dom_sf"/>
</dbReference>
<dbReference type="NCBIfam" id="TIGR01011">
    <property type="entry name" value="rpsB_bact"/>
    <property type="match status" value="1"/>
</dbReference>
<dbReference type="PANTHER" id="PTHR12534">
    <property type="entry name" value="30S RIBOSOMAL PROTEIN S2 PROKARYOTIC AND ORGANELLAR"/>
    <property type="match status" value="1"/>
</dbReference>
<dbReference type="PANTHER" id="PTHR12534:SF0">
    <property type="entry name" value="SMALL RIBOSOMAL SUBUNIT PROTEIN US2M"/>
    <property type="match status" value="1"/>
</dbReference>
<dbReference type="Pfam" id="PF00318">
    <property type="entry name" value="Ribosomal_S2"/>
    <property type="match status" value="1"/>
</dbReference>
<dbReference type="PRINTS" id="PR00395">
    <property type="entry name" value="RIBOSOMALS2"/>
</dbReference>
<dbReference type="SUPFAM" id="SSF52313">
    <property type="entry name" value="Ribosomal protein S2"/>
    <property type="match status" value="1"/>
</dbReference>
<dbReference type="PROSITE" id="PS00962">
    <property type="entry name" value="RIBOSOMAL_S2_1"/>
    <property type="match status" value="1"/>
</dbReference>
<keyword id="KW-0687">Ribonucleoprotein</keyword>
<keyword id="KW-0689">Ribosomal protein</keyword>
<protein>
    <recommendedName>
        <fullName evidence="1">Small ribosomal subunit protein uS2</fullName>
    </recommendedName>
    <alternativeName>
        <fullName evidence="2">30S ribosomal protein S2</fullName>
    </alternativeName>
</protein>
<accession>C0MEG6</accession>
<gene>
    <name evidence="1" type="primary">rpsB</name>
    <name type="ordered locus">SZO_01160</name>
</gene>
<feature type="chain" id="PRO_1000204894" description="Small ribosomal subunit protein uS2">
    <location>
        <begin position="1"/>
        <end position="256"/>
    </location>
</feature>
<reference key="1">
    <citation type="journal article" date="2009" name="PLoS Pathog.">
        <title>Genomic evidence for the evolution of Streptococcus equi: host restriction, increased virulence, and genetic exchange with human pathogens.</title>
        <authorList>
            <person name="Holden M.T.G."/>
            <person name="Heather Z."/>
            <person name="Paillot R."/>
            <person name="Steward K.F."/>
            <person name="Webb K."/>
            <person name="Ainslie F."/>
            <person name="Jourdan T."/>
            <person name="Bason N.C."/>
            <person name="Holroyd N.E."/>
            <person name="Mungall K."/>
            <person name="Quail M.A."/>
            <person name="Sanders M."/>
            <person name="Simmonds M."/>
            <person name="Willey D."/>
            <person name="Brooks K."/>
            <person name="Aanensen D.M."/>
            <person name="Spratt B.G."/>
            <person name="Jolley K.A."/>
            <person name="Maiden M.C.J."/>
            <person name="Kehoe M."/>
            <person name="Chanter N."/>
            <person name="Bentley S.D."/>
            <person name="Robinson C."/>
            <person name="Maskell D.J."/>
            <person name="Parkhill J."/>
            <person name="Waller A.S."/>
        </authorList>
    </citation>
    <scope>NUCLEOTIDE SEQUENCE [LARGE SCALE GENOMIC DNA]</scope>
    <source>
        <strain>H70</strain>
    </source>
</reference>
<proteinExistence type="inferred from homology"/>
<sequence>MAVISMKQLLEAGVHFGHQTRRWNPKMAKYIFTERNGIHVIDLQQTVKLADQAYEFVRDAAANDAVILFVGTKKQAAEAVADEATRAGQYFINHRWLGGTLTNWGTIQKRIARLKEIKRMEEEGTFEVLPKKEVALLNKQRARLEKFLGGIEDMPRIPDVMYVVDPHKEQIAVKEAKKLGIPVVAMVDTNADPDDIDVIIPANDDAIRAVKLITAKLADAVIEGRQGEDAEVAFEADTQAESIEEIVEVVEGSNEA</sequence>
<organism>
    <name type="scientific">Streptococcus equi subsp. zooepidemicus (strain H70)</name>
    <dbReference type="NCBI Taxonomy" id="553483"/>
    <lineage>
        <taxon>Bacteria</taxon>
        <taxon>Bacillati</taxon>
        <taxon>Bacillota</taxon>
        <taxon>Bacilli</taxon>
        <taxon>Lactobacillales</taxon>
        <taxon>Streptococcaceae</taxon>
        <taxon>Streptococcus</taxon>
    </lineage>
</organism>
<evidence type="ECO:0000255" key="1">
    <source>
        <dbReference type="HAMAP-Rule" id="MF_00291"/>
    </source>
</evidence>
<evidence type="ECO:0000305" key="2"/>
<name>RS2_STRS7</name>
<comment type="similarity">
    <text evidence="1">Belongs to the universal ribosomal protein uS2 family.</text>
</comment>